<feature type="chain" id="PRO_1000114206" description="Cell division topological specificity factor">
    <location>
        <begin position="1"/>
        <end position="84"/>
    </location>
</feature>
<organism>
    <name type="scientific">Burkholderia cenocepacia (strain ATCC BAA-245 / DSM 16553 / LMG 16656 / NCTC 13227 / J2315 / CF5610)</name>
    <name type="common">Burkholderia cepacia (strain J2315)</name>
    <dbReference type="NCBI Taxonomy" id="216591"/>
    <lineage>
        <taxon>Bacteria</taxon>
        <taxon>Pseudomonadati</taxon>
        <taxon>Pseudomonadota</taxon>
        <taxon>Betaproteobacteria</taxon>
        <taxon>Burkholderiales</taxon>
        <taxon>Burkholderiaceae</taxon>
        <taxon>Burkholderia</taxon>
        <taxon>Burkholderia cepacia complex</taxon>
    </lineage>
</organism>
<comment type="function">
    <text evidence="1">Prevents the cell division inhibition by proteins MinC and MinD at internal division sites while permitting inhibition at polar sites. This ensures cell division at the proper site by restricting the formation of a division septum at the midpoint of the long axis of the cell.</text>
</comment>
<comment type="similarity">
    <text evidence="1">Belongs to the MinE family.</text>
</comment>
<accession>B4EBQ9</accession>
<evidence type="ECO:0000255" key="1">
    <source>
        <dbReference type="HAMAP-Rule" id="MF_00262"/>
    </source>
</evidence>
<reference key="1">
    <citation type="journal article" date="2009" name="J. Bacteriol.">
        <title>The genome of Burkholderia cenocepacia J2315, an epidemic pathogen of cystic fibrosis patients.</title>
        <authorList>
            <person name="Holden M.T."/>
            <person name="Seth-Smith H.M."/>
            <person name="Crossman L.C."/>
            <person name="Sebaihia M."/>
            <person name="Bentley S.D."/>
            <person name="Cerdeno-Tarraga A.M."/>
            <person name="Thomson N.R."/>
            <person name="Bason N."/>
            <person name="Quail M.A."/>
            <person name="Sharp S."/>
            <person name="Cherevach I."/>
            <person name="Churcher C."/>
            <person name="Goodhead I."/>
            <person name="Hauser H."/>
            <person name="Holroyd N."/>
            <person name="Mungall K."/>
            <person name="Scott P."/>
            <person name="Walker D."/>
            <person name="White B."/>
            <person name="Rose H."/>
            <person name="Iversen P."/>
            <person name="Mil-Homens D."/>
            <person name="Rocha E.P."/>
            <person name="Fialho A.M."/>
            <person name="Baldwin A."/>
            <person name="Dowson C."/>
            <person name="Barrell B.G."/>
            <person name="Govan J.R."/>
            <person name="Vandamme P."/>
            <person name="Hart C.A."/>
            <person name="Mahenthiralingam E."/>
            <person name="Parkhill J."/>
        </authorList>
    </citation>
    <scope>NUCLEOTIDE SEQUENCE [LARGE SCALE GENOMIC DNA]</scope>
    <source>
        <strain>ATCC BAA-245 / DSM 16553 / LMG 16656 / NCTC 13227 / J2315 / CF5610</strain>
    </source>
</reference>
<dbReference type="EMBL" id="AM747720">
    <property type="protein sequence ID" value="CAR53347.1"/>
    <property type="molecule type" value="Genomic_DNA"/>
</dbReference>
<dbReference type="RefSeq" id="WP_006486661.1">
    <property type="nucleotide sequence ID" value="NC_011000.1"/>
</dbReference>
<dbReference type="SMR" id="B4EBQ9"/>
<dbReference type="GeneID" id="98102632"/>
<dbReference type="KEGG" id="bcj:BCAL3025"/>
<dbReference type="eggNOG" id="COG0851">
    <property type="taxonomic scope" value="Bacteria"/>
</dbReference>
<dbReference type="HOGENOM" id="CLU_137929_2_1_4"/>
<dbReference type="BioCyc" id="BCEN216591:G1G1V-3351-MONOMER"/>
<dbReference type="Proteomes" id="UP000001035">
    <property type="component" value="Chromosome 1"/>
</dbReference>
<dbReference type="GO" id="GO:0051301">
    <property type="term" value="P:cell division"/>
    <property type="evidence" value="ECO:0007669"/>
    <property type="project" value="UniProtKB-KW"/>
</dbReference>
<dbReference type="GO" id="GO:0032955">
    <property type="term" value="P:regulation of division septum assembly"/>
    <property type="evidence" value="ECO:0007669"/>
    <property type="project" value="InterPro"/>
</dbReference>
<dbReference type="FunFam" id="3.30.1070.10:FF:000001">
    <property type="entry name" value="Cell division topological specificity factor"/>
    <property type="match status" value="1"/>
</dbReference>
<dbReference type="Gene3D" id="3.30.1070.10">
    <property type="entry name" value="Cell division topological specificity factor MinE"/>
    <property type="match status" value="1"/>
</dbReference>
<dbReference type="HAMAP" id="MF_00262">
    <property type="entry name" value="MinE"/>
    <property type="match status" value="1"/>
</dbReference>
<dbReference type="InterPro" id="IPR005527">
    <property type="entry name" value="MinE"/>
</dbReference>
<dbReference type="InterPro" id="IPR036707">
    <property type="entry name" value="MinE_sf"/>
</dbReference>
<dbReference type="NCBIfam" id="TIGR01215">
    <property type="entry name" value="minE"/>
    <property type="match status" value="1"/>
</dbReference>
<dbReference type="NCBIfam" id="NF001422">
    <property type="entry name" value="PRK00296.1"/>
    <property type="match status" value="1"/>
</dbReference>
<dbReference type="NCBIfam" id="NF010595">
    <property type="entry name" value="PRK13989.1"/>
    <property type="match status" value="1"/>
</dbReference>
<dbReference type="Pfam" id="PF03776">
    <property type="entry name" value="MinE"/>
    <property type="match status" value="1"/>
</dbReference>
<dbReference type="SUPFAM" id="SSF55229">
    <property type="entry name" value="Cell division protein MinE topological specificity domain"/>
    <property type="match status" value="1"/>
</dbReference>
<proteinExistence type="inferred from homology"/>
<protein>
    <recommendedName>
        <fullName evidence="1">Cell division topological specificity factor</fullName>
    </recommendedName>
</protein>
<keyword id="KW-0131">Cell cycle</keyword>
<keyword id="KW-0132">Cell division</keyword>
<sequence>MSILSFLLGEKKKSASVAKERLQLIIAHERVGGRPPADYLPALQKELVAVISKYVHISNDDIRVSLERQDDLEVLEVKIEIPQA</sequence>
<name>MINE_BURCJ</name>
<gene>
    <name evidence="1" type="primary">minE</name>
    <name type="ordered locus">BceJ2315_29710</name>
    <name type="ORF">BCAL3025</name>
</gene>